<comment type="function">
    <text evidence="1">The RuvA-RuvB-RuvC complex processes Holliday junction (HJ) DNA during genetic recombination and DNA repair. Endonuclease that resolves HJ intermediates. Cleaves cruciform DNA by making single-stranded nicks across the HJ at symmetrical positions within the homologous arms, yielding a 5'-phosphate and a 3'-hydroxyl group; requires a central core of homology in the junction. The consensus cleavage sequence is 5'-(A/T)TT(C/G)-3'. Cleavage occurs on the 3'-side of the TT dinucleotide at the point of strand exchange. HJ branch migration catalyzed by RuvA-RuvB allows RuvC to scan DNA until it finds its consensus sequence, where it cleaves and resolves the cruciform DNA.</text>
</comment>
<comment type="catalytic activity">
    <reaction evidence="1">
        <text>Endonucleolytic cleavage at a junction such as a reciprocal single-stranded crossover between two homologous DNA duplexes (Holliday junction).</text>
        <dbReference type="EC" id="3.1.21.10"/>
    </reaction>
</comment>
<comment type="cofactor">
    <cofactor evidence="1">
        <name>Mg(2+)</name>
        <dbReference type="ChEBI" id="CHEBI:18420"/>
    </cofactor>
    <text evidence="1">Binds 2 Mg(2+) ion per subunit.</text>
</comment>
<comment type="subunit">
    <text evidence="1">Homodimer which binds Holliday junction (HJ) DNA. The HJ becomes 2-fold symmetrical on binding to RuvC with unstacked arms; it has a different conformation from HJ DNA in complex with RuvA. In the full resolvosome a probable DNA-RuvA(4)-RuvB(12)-RuvC(2) complex forms which resolves the HJ.</text>
</comment>
<comment type="subcellular location">
    <subcellularLocation>
        <location evidence="1">Cytoplasm</location>
    </subcellularLocation>
</comment>
<comment type="similarity">
    <text evidence="1">Belongs to the RuvC family.</text>
</comment>
<accession>Q20X08</accession>
<feature type="chain" id="PRO_1000002813" description="Crossover junction endodeoxyribonuclease RuvC">
    <location>
        <begin position="1"/>
        <end position="175"/>
    </location>
</feature>
<feature type="active site" evidence="1">
    <location>
        <position position="16"/>
    </location>
</feature>
<feature type="active site" evidence="1">
    <location>
        <position position="76"/>
    </location>
</feature>
<feature type="active site" evidence="1">
    <location>
        <position position="148"/>
    </location>
</feature>
<feature type="binding site" evidence="1">
    <location>
        <position position="16"/>
    </location>
    <ligand>
        <name>Mg(2+)</name>
        <dbReference type="ChEBI" id="CHEBI:18420"/>
        <label>1</label>
    </ligand>
</feature>
<feature type="binding site" evidence="1">
    <location>
        <position position="76"/>
    </location>
    <ligand>
        <name>Mg(2+)</name>
        <dbReference type="ChEBI" id="CHEBI:18420"/>
        <label>2</label>
    </ligand>
</feature>
<feature type="binding site" evidence="1">
    <location>
        <position position="148"/>
    </location>
    <ligand>
        <name>Mg(2+)</name>
        <dbReference type="ChEBI" id="CHEBI:18420"/>
        <label>1</label>
    </ligand>
</feature>
<sequence length="175" mass="18347">MSAPPIRQPIRILGIDPGLRRTGWGVIESCGNRLVFIGCGSVEPDNDLPLASRLLEIHHGLAKVLAEFVPAEAAVEQTFVNKDAGATLKLGQARGIAMLAPALVGIAVAEYAPNLIKKTVIGAGHADKAQIQMMLKILLPKAEPKTADAADALAIAITHAHHRGGALLRLKAVQA</sequence>
<evidence type="ECO:0000255" key="1">
    <source>
        <dbReference type="HAMAP-Rule" id="MF_00034"/>
    </source>
</evidence>
<reference key="1">
    <citation type="submission" date="2006-03" db="EMBL/GenBank/DDBJ databases">
        <title>Complete sequence of Rhodopseudomonas palustris BisB18.</title>
        <authorList>
            <consortium name="US DOE Joint Genome Institute"/>
            <person name="Copeland A."/>
            <person name="Lucas S."/>
            <person name="Lapidus A."/>
            <person name="Barry K."/>
            <person name="Detter J.C."/>
            <person name="Glavina del Rio T."/>
            <person name="Hammon N."/>
            <person name="Israni S."/>
            <person name="Dalin E."/>
            <person name="Tice H."/>
            <person name="Pitluck S."/>
            <person name="Chain P."/>
            <person name="Malfatti S."/>
            <person name="Shin M."/>
            <person name="Vergez L."/>
            <person name="Schmutz J."/>
            <person name="Larimer F."/>
            <person name="Land M."/>
            <person name="Hauser L."/>
            <person name="Pelletier D.A."/>
            <person name="Kyrpides N."/>
            <person name="Anderson I."/>
            <person name="Oda Y."/>
            <person name="Harwood C.S."/>
            <person name="Richardson P."/>
        </authorList>
    </citation>
    <scope>NUCLEOTIDE SEQUENCE [LARGE SCALE GENOMIC DNA]</scope>
    <source>
        <strain>BisB18</strain>
    </source>
</reference>
<organism>
    <name type="scientific">Rhodopseudomonas palustris (strain BisB18)</name>
    <dbReference type="NCBI Taxonomy" id="316056"/>
    <lineage>
        <taxon>Bacteria</taxon>
        <taxon>Pseudomonadati</taxon>
        <taxon>Pseudomonadota</taxon>
        <taxon>Alphaproteobacteria</taxon>
        <taxon>Hyphomicrobiales</taxon>
        <taxon>Nitrobacteraceae</taxon>
        <taxon>Rhodopseudomonas</taxon>
    </lineage>
</organism>
<gene>
    <name evidence="1" type="primary">ruvC</name>
    <name type="ordered locus">RPC_4806</name>
</gene>
<proteinExistence type="inferred from homology"/>
<dbReference type="EC" id="3.1.21.10" evidence="1"/>
<dbReference type="EMBL" id="CP000301">
    <property type="protein sequence ID" value="ABD90328.1"/>
    <property type="molecule type" value="Genomic_DNA"/>
</dbReference>
<dbReference type="SMR" id="Q20X08"/>
<dbReference type="STRING" id="316056.RPC_4806"/>
<dbReference type="KEGG" id="rpc:RPC_4806"/>
<dbReference type="eggNOG" id="COG0817">
    <property type="taxonomic scope" value="Bacteria"/>
</dbReference>
<dbReference type="HOGENOM" id="CLU_091257_1_0_5"/>
<dbReference type="OrthoDB" id="9805499at2"/>
<dbReference type="GO" id="GO:0005737">
    <property type="term" value="C:cytoplasm"/>
    <property type="evidence" value="ECO:0007669"/>
    <property type="project" value="UniProtKB-SubCell"/>
</dbReference>
<dbReference type="GO" id="GO:0048476">
    <property type="term" value="C:Holliday junction resolvase complex"/>
    <property type="evidence" value="ECO:0007669"/>
    <property type="project" value="UniProtKB-UniRule"/>
</dbReference>
<dbReference type="GO" id="GO:0008821">
    <property type="term" value="F:crossover junction DNA endonuclease activity"/>
    <property type="evidence" value="ECO:0007669"/>
    <property type="project" value="UniProtKB-UniRule"/>
</dbReference>
<dbReference type="GO" id="GO:0003677">
    <property type="term" value="F:DNA binding"/>
    <property type="evidence" value="ECO:0007669"/>
    <property type="project" value="UniProtKB-KW"/>
</dbReference>
<dbReference type="GO" id="GO:0000287">
    <property type="term" value="F:magnesium ion binding"/>
    <property type="evidence" value="ECO:0007669"/>
    <property type="project" value="UniProtKB-UniRule"/>
</dbReference>
<dbReference type="GO" id="GO:0006310">
    <property type="term" value="P:DNA recombination"/>
    <property type="evidence" value="ECO:0007669"/>
    <property type="project" value="UniProtKB-UniRule"/>
</dbReference>
<dbReference type="GO" id="GO:0006281">
    <property type="term" value="P:DNA repair"/>
    <property type="evidence" value="ECO:0007669"/>
    <property type="project" value="UniProtKB-UniRule"/>
</dbReference>
<dbReference type="CDD" id="cd16962">
    <property type="entry name" value="RuvC"/>
    <property type="match status" value="1"/>
</dbReference>
<dbReference type="FunFam" id="3.30.420.10:FF:000002">
    <property type="entry name" value="Crossover junction endodeoxyribonuclease RuvC"/>
    <property type="match status" value="1"/>
</dbReference>
<dbReference type="Gene3D" id="3.30.420.10">
    <property type="entry name" value="Ribonuclease H-like superfamily/Ribonuclease H"/>
    <property type="match status" value="1"/>
</dbReference>
<dbReference type="HAMAP" id="MF_00034">
    <property type="entry name" value="RuvC"/>
    <property type="match status" value="1"/>
</dbReference>
<dbReference type="InterPro" id="IPR012337">
    <property type="entry name" value="RNaseH-like_sf"/>
</dbReference>
<dbReference type="InterPro" id="IPR036397">
    <property type="entry name" value="RNaseH_sf"/>
</dbReference>
<dbReference type="InterPro" id="IPR020563">
    <property type="entry name" value="X-over_junc_endoDNase_Mg_BS"/>
</dbReference>
<dbReference type="InterPro" id="IPR002176">
    <property type="entry name" value="X-over_junc_endoDNase_RuvC"/>
</dbReference>
<dbReference type="NCBIfam" id="TIGR00228">
    <property type="entry name" value="ruvC"/>
    <property type="match status" value="1"/>
</dbReference>
<dbReference type="PANTHER" id="PTHR30194">
    <property type="entry name" value="CROSSOVER JUNCTION ENDODEOXYRIBONUCLEASE RUVC"/>
    <property type="match status" value="1"/>
</dbReference>
<dbReference type="PANTHER" id="PTHR30194:SF3">
    <property type="entry name" value="CROSSOVER JUNCTION ENDODEOXYRIBONUCLEASE RUVC"/>
    <property type="match status" value="1"/>
</dbReference>
<dbReference type="Pfam" id="PF02075">
    <property type="entry name" value="RuvC"/>
    <property type="match status" value="1"/>
</dbReference>
<dbReference type="PRINTS" id="PR00696">
    <property type="entry name" value="RSOLVASERUVC"/>
</dbReference>
<dbReference type="SUPFAM" id="SSF53098">
    <property type="entry name" value="Ribonuclease H-like"/>
    <property type="match status" value="1"/>
</dbReference>
<dbReference type="PROSITE" id="PS01321">
    <property type="entry name" value="RUVC"/>
    <property type="match status" value="1"/>
</dbReference>
<name>RUVC_RHOPB</name>
<protein>
    <recommendedName>
        <fullName evidence="1">Crossover junction endodeoxyribonuclease RuvC</fullName>
        <ecNumber evidence="1">3.1.21.10</ecNumber>
    </recommendedName>
    <alternativeName>
        <fullName evidence="1">Holliday junction nuclease RuvC</fullName>
    </alternativeName>
    <alternativeName>
        <fullName evidence="1">Holliday junction resolvase RuvC</fullName>
    </alternativeName>
</protein>
<keyword id="KW-0963">Cytoplasm</keyword>
<keyword id="KW-0227">DNA damage</keyword>
<keyword id="KW-0233">DNA recombination</keyword>
<keyword id="KW-0234">DNA repair</keyword>
<keyword id="KW-0238">DNA-binding</keyword>
<keyword id="KW-0255">Endonuclease</keyword>
<keyword id="KW-0378">Hydrolase</keyword>
<keyword id="KW-0460">Magnesium</keyword>
<keyword id="KW-0479">Metal-binding</keyword>
<keyword id="KW-0540">Nuclease</keyword>